<comment type="function">
    <text evidence="1">Component of the cytochrome b6-f complex, which mediates electron transfer between photosystem II (PSII) and photosystem I (PSI), cyclic electron flow around PSI, and state transitions. PetL is important for photoautotrophic growth as well as for electron transfer efficiency and stability of the cytochrome b6-f complex.</text>
</comment>
<comment type="subunit">
    <text evidence="1">The 4 large subunits of the cytochrome b6-f complex are cytochrome b6, subunit IV (17 kDa polypeptide, PetD), cytochrome f and the Rieske protein, while the 4 small subunits are PetG, PetL, PetM and PetN. The complex functions as a dimer.</text>
</comment>
<comment type="subcellular location">
    <subcellularLocation>
        <location evidence="1">Plastid</location>
        <location evidence="1">Chloroplast thylakoid membrane</location>
        <topology evidence="1">Single-pass membrane protein</topology>
    </subcellularLocation>
</comment>
<comment type="similarity">
    <text evidence="1">Belongs to the PetL family.</text>
</comment>
<geneLocation type="chloroplast"/>
<protein>
    <recommendedName>
        <fullName evidence="1">Cytochrome b6-f complex subunit 6</fullName>
    </recommendedName>
    <alternativeName>
        <fullName evidence="1">Cytochrome b6-f complex subunit PetL</fullName>
    </alternativeName>
    <alternativeName>
        <fullName evidence="1">Cytochrome b6-f complex subunit VI</fullName>
    </alternativeName>
</protein>
<reference key="1">
    <citation type="journal article" date="2000" name="Mol. Gen. Genet.">
        <title>Complete nucleotide sequence of the Oenothera elata plastid chromosome, representing plastome I of the five distinguishable Euoenothera plastomes.</title>
        <authorList>
            <person name="Hupfer H."/>
            <person name="Swiatek M."/>
            <person name="Hornung S."/>
            <person name="Herrmann R.G."/>
            <person name="Maier R.M."/>
            <person name="Chiu W.-L."/>
            <person name="Sears B."/>
        </authorList>
    </citation>
    <scope>NUCLEOTIDE SEQUENCE [LARGE SCALE GENOMIC DNA]</scope>
    <source>
        <strain>cv. Johansen</strain>
    </source>
</reference>
<feature type="chain" id="PRO_0000220462" description="Cytochrome b6-f complex subunit 6">
    <location>
        <begin position="1"/>
        <end position="31"/>
    </location>
</feature>
<feature type="transmembrane region" description="Helical" evidence="1">
    <location>
        <begin position="4"/>
        <end position="24"/>
    </location>
</feature>
<keyword id="KW-0150">Chloroplast</keyword>
<keyword id="KW-0249">Electron transport</keyword>
<keyword id="KW-0472">Membrane</keyword>
<keyword id="KW-0602">Photosynthesis</keyword>
<keyword id="KW-0934">Plastid</keyword>
<keyword id="KW-0793">Thylakoid</keyword>
<keyword id="KW-0812">Transmembrane</keyword>
<keyword id="KW-1133">Transmembrane helix</keyword>
<keyword id="KW-0813">Transport</keyword>
<dbReference type="EMBL" id="AJ271079">
    <property type="protein sequence ID" value="CAB67175.1"/>
    <property type="molecule type" value="Genomic_DNA"/>
</dbReference>
<dbReference type="RefSeq" id="NP_084710.1">
    <property type="nucleotide sequence ID" value="NC_002693.2"/>
</dbReference>
<dbReference type="SMR" id="Q9MTK4"/>
<dbReference type="GeneID" id="802739"/>
<dbReference type="GO" id="GO:0009535">
    <property type="term" value="C:chloroplast thylakoid membrane"/>
    <property type="evidence" value="ECO:0007669"/>
    <property type="project" value="UniProtKB-SubCell"/>
</dbReference>
<dbReference type="GO" id="GO:0009512">
    <property type="term" value="C:cytochrome b6f complex"/>
    <property type="evidence" value="ECO:0007669"/>
    <property type="project" value="InterPro"/>
</dbReference>
<dbReference type="GO" id="GO:0045158">
    <property type="term" value="F:electron transporter, transferring electrons within cytochrome b6/f complex of photosystem II activity"/>
    <property type="evidence" value="ECO:0007669"/>
    <property type="project" value="UniProtKB-UniRule"/>
</dbReference>
<dbReference type="GO" id="GO:0015979">
    <property type="term" value="P:photosynthesis"/>
    <property type="evidence" value="ECO:0007669"/>
    <property type="project" value="UniProtKB-KW"/>
</dbReference>
<dbReference type="HAMAP" id="MF_00433">
    <property type="entry name" value="Cytb6_f_PetL"/>
    <property type="match status" value="1"/>
</dbReference>
<dbReference type="InterPro" id="IPR007802">
    <property type="entry name" value="Cyt_b6/f_cplx_su6"/>
</dbReference>
<dbReference type="PANTHER" id="PTHR37266">
    <property type="entry name" value="CYTOCHROME B6-F COMPLEX SUBUNIT 6"/>
    <property type="match status" value="1"/>
</dbReference>
<dbReference type="PANTHER" id="PTHR37266:SF1">
    <property type="entry name" value="CYTOCHROME B6-F COMPLEX SUBUNIT 6"/>
    <property type="match status" value="1"/>
</dbReference>
<dbReference type="Pfam" id="PF05115">
    <property type="entry name" value="PetL"/>
    <property type="match status" value="1"/>
</dbReference>
<accession>Q9MTK4</accession>
<proteinExistence type="inferred from homology"/>
<gene>
    <name evidence="1" type="primary">petL</name>
</gene>
<organism>
    <name type="scientific">Oenothera elata subsp. hookeri</name>
    <name type="common">Hooker's evening primrose</name>
    <name type="synonym">Oenothera hookeri</name>
    <dbReference type="NCBI Taxonomy" id="85636"/>
    <lineage>
        <taxon>Eukaryota</taxon>
        <taxon>Viridiplantae</taxon>
        <taxon>Streptophyta</taxon>
        <taxon>Embryophyta</taxon>
        <taxon>Tracheophyta</taxon>
        <taxon>Spermatophyta</taxon>
        <taxon>Magnoliopsida</taxon>
        <taxon>eudicotyledons</taxon>
        <taxon>Gunneridae</taxon>
        <taxon>Pentapetalae</taxon>
        <taxon>rosids</taxon>
        <taxon>malvids</taxon>
        <taxon>Myrtales</taxon>
        <taxon>Onagraceae</taxon>
        <taxon>Onagroideae</taxon>
        <taxon>Onagreae</taxon>
        <taxon>Oenothera</taxon>
    </lineage>
</organism>
<name>PETL_OENEH</name>
<evidence type="ECO:0000255" key="1">
    <source>
        <dbReference type="HAMAP-Rule" id="MF_00433"/>
    </source>
</evidence>
<sequence>MLTITSFFGFLLAALTITSVLFIGLTKIRLI</sequence>